<protein>
    <recommendedName>
        <fullName>Homeobox protein XHOX-7.1'</fullName>
    </recommendedName>
</protein>
<dbReference type="EMBL" id="X58772">
    <property type="protein sequence ID" value="CAA41573.1"/>
    <property type="molecule type" value="mRNA"/>
</dbReference>
<dbReference type="PIR" id="B60131">
    <property type="entry name" value="B60131"/>
</dbReference>
<dbReference type="SMR" id="P35993"/>
<dbReference type="AGR" id="Xenbase:XB-GENE-866454"/>
<dbReference type="Xenbase" id="XB-GENE-866454">
    <property type="gene designation" value="msx2.L"/>
</dbReference>
<dbReference type="Proteomes" id="UP000186698">
    <property type="component" value="Unplaced"/>
</dbReference>
<dbReference type="GO" id="GO:0005634">
    <property type="term" value="C:nucleus"/>
    <property type="evidence" value="ECO:0000318"/>
    <property type="project" value="GO_Central"/>
</dbReference>
<dbReference type="GO" id="GO:0000981">
    <property type="term" value="F:DNA-binding transcription factor activity, RNA polymerase II-specific"/>
    <property type="evidence" value="ECO:0000318"/>
    <property type="project" value="GO_Central"/>
</dbReference>
<dbReference type="GO" id="GO:0000977">
    <property type="term" value="F:RNA polymerase II transcription regulatory region sequence-specific DNA binding"/>
    <property type="evidence" value="ECO:0000318"/>
    <property type="project" value="GO_Central"/>
</dbReference>
<dbReference type="GO" id="GO:0048598">
    <property type="term" value="P:embryonic morphogenesis"/>
    <property type="evidence" value="ECO:0000318"/>
    <property type="project" value="GO_Central"/>
</dbReference>
<dbReference type="GO" id="GO:0006357">
    <property type="term" value="P:regulation of transcription by RNA polymerase II"/>
    <property type="evidence" value="ECO:0000318"/>
    <property type="project" value="GO_Central"/>
</dbReference>
<dbReference type="CDD" id="cd00086">
    <property type="entry name" value="homeodomain"/>
    <property type="match status" value="1"/>
</dbReference>
<dbReference type="FunFam" id="1.10.10.60:FF:000134">
    <property type="entry name" value="Homeobox protein MSX-1"/>
    <property type="match status" value="1"/>
</dbReference>
<dbReference type="Gene3D" id="1.10.10.60">
    <property type="entry name" value="Homeodomain-like"/>
    <property type="match status" value="1"/>
</dbReference>
<dbReference type="InterPro" id="IPR001356">
    <property type="entry name" value="HD"/>
</dbReference>
<dbReference type="InterPro" id="IPR020479">
    <property type="entry name" value="HD_metazoa"/>
</dbReference>
<dbReference type="InterPro" id="IPR017970">
    <property type="entry name" value="Homeobox_CS"/>
</dbReference>
<dbReference type="InterPro" id="IPR009057">
    <property type="entry name" value="Homeodomain-like_sf"/>
</dbReference>
<dbReference type="InterPro" id="IPR050674">
    <property type="entry name" value="Msh_Homeobox_Regulators"/>
</dbReference>
<dbReference type="PANTHER" id="PTHR24338">
    <property type="entry name" value="HOMEOBOX PROTEIN MSX"/>
    <property type="match status" value="1"/>
</dbReference>
<dbReference type="PANTHER" id="PTHR24338:SF10">
    <property type="entry name" value="HOMEOBOX PROTEIN MSX-2"/>
    <property type="match status" value="1"/>
</dbReference>
<dbReference type="Pfam" id="PF00046">
    <property type="entry name" value="Homeodomain"/>
    <property type="match status" value="1"/>
</dbReference>
<dbReference type="PRINTS" id="PR00024">
    <property type="entry name" value="HOMEOBOX"/>
</dbReference>
<dbReference type="SMART" id="SM00389">
    <property type="entry name" value="HOX"/>
    <property type="match status" value="1"/>
</dbReference>
<dbReference type="SUPFAM" id="SSF46689">
    <property type="entry name" value="Homeodomain-like"/>
    <property type="match status" value="1"/>
</dbReference>
<dbReference type="PROSITE" id="PS00027">
    <property type="entry name" value="HOMEOBOX_1"/>
    <property type="match status" value="1"/>
</dbReference>
<dbReference type="PROSITE" id="PS50071">
    <property type="entry name" value="HOMEOBOX_2"/>
    <property type="match status" value="1"/>
</dbReference>
<proteinExistence type="evidence at transcript level"/>
<feature type="chain" id="PRO_0000049146" description="Homeobox protein XHOX-7.1'">
    <location>
        <begin position="1" status="less than"/>
        <end position="291"/>
    </location>
</feature>
<feature type="DNA-binding region" description="Homeobox" evidence="1">
    <location>
        <begin position="160"/>
        <end position="219"/>
    </location>
</feature>
<feature type="region of interest" description="Disordered" evidence="2">
    <location>
        <begin position="36"/>
        <end position="58"/>
    </location>
</feature>
<feature type="region of interest" description="Disordered" evidence="2">
    <location>
        <begin position="75"/>
        <end position="169"/>
    </location>
</feature>
<feature type="compositionally biased region" description="Basic residues" evidence="2">
    <location>
        <begin position="154"/>
        <end position="164"/>
    </location>
</feature>
<feature type="non-terminal residue">
    <location>
        <position position="1"/>
    </location>
</feature>
<sequence length="291" mass="32293">GSLQLLLLLLLLQCDKKGICSCAPLLTAMSSPRRIKEDLSSDEEGQVHPTLSPSEDHKIKISSLPFSVEALMADKRVPKEAPPSRAVDSSAATSTPNRHLHLGIRDSPSPLGSQKGLKPRRSNRKNSEDGTSWSKDGGSYSPPPRHLSPSSCTLRKHKTNRKPRTPFTTSQLLALERKFRQKQYLSIAERAEFSSSLNLTETQVKIWFQNRRAKAKRLQEAEIEKLKMAAKPILPPGFSIPFPINSPIQAASLYGSSYQFHRPVLPIPPMGLYATPVGYSMYHLSEEGDMT</sequence>
<keyword id="KW-0217">Developmental protein</keyword>
<keyword id="KW-0238">DNA-binding</keyword>
<keyword id="KW-0371">Homeobox</keyword>
<keyword id="KW-0539">Nucleus</keyword>
<keyword id="KW-1185">Reference proteome</keyword>
<evidence type="ECO:0000255" key="1">
    <source>
        <dbReference type="PROSITE-ProRule" id="PRU00108"/>
    </source>
</evidence>
<evidence type="ECO:0000256" key="2">
    <source>
        <dbReference type="SAM" id="MobiDB-lite"/>
    </source>
</evidence>
<evidence type="ECO:0000305" key="3"/>
<reference key="1">
    <citation type="journal article" date="1991" name="Development">
        <title>Progressively restricted expression of a new homeobox-containing gene during Xenopus laevis embryogenesis.</title>
        <authorList>
            <person name="Su M.-W."/>
            <person name="Suzuki H.R."/>
            <person name="Solursh M."/>
            <person name="Ramirez F."/>
        </authorList>
    </citation>
    <scope>NUCLEOTIDE SEQUENCE [MRNA]</scope>
</reference>
<name>HOX7P_XENLA</name>
<accession>P35993</accession>
<comment type="subcellular location">
    <subcellularLocation>
        <location evidence="3">Nucleus</location>
    </subcellularLocation>
</comment>
<comment type="similarity">
    <text evidence="3">Belongs to the Msh homeobox family.</text>
</comment>
<organism>
    <name type="scientific">Xenopus laevis</name>
    <name type="common">African clawed frog</name>
    <dbReference type="NCBI Taxonomy" id="8355"/>
    <lineage>
        <taxon>Eukaryota</taxon>
        <taxon>Metazoa</taxon>
        <taxon>Chordata</taxon>
        <taxon>Craniata</taxon>
        <taxon>Vertebrata</taxon>
        <taxon>Euteleostomi</taxon>
        <taxon>Amphibia</taxon>
        <taxon>Batrachia</taxon>
        <taxon>Anura</taxon>
        <taxon>Pipoidea</taxon>
        <taxon>Pipidae</taxon>
        <taxon>Xenopodinae</taxon>
        <taxon>Xenopus</taxon>
        <taxon>Xenopus</taxon>
    </lineage>
</organism>